<gene>
    <name evidence="1" type="primary">tpiA</name>
    <name type="ordered locus">Pput_4581</name>
</gene>
<keyword id="KW-0963">Cytoplasm</keyword>
<keyword id="KW-0312">Gluconeogenesis</keyword>
<keyword id="KW-0324">Glycolysis</keyword>
<keyword id="KW-0413">Isomerase</keyword>
<accession>A5W991</accession>
<protein>
    <recommendedName>
        <fullName evidence="1">Triosephosphate isomerase</fullName>
        <shortName evidence="1">TIM</shortName>
        <shortName evidence="1">TPI</shortName>
        <ecNumber evidence="1">5.3.1.1</ecNumber>
    </recommendedName>
    <alternativeName>
        <fullName evidence="1">Triose-phosphate isomerase</fullName>
    </alternativeName>
</protein>
<name>TPIS_PSEP1</name>
<evidence type="ECO:0000255" key="1">
    <source>
        <dbReference type="HAMAP-Rule" id="MF_00147"/>
    </source>
</evidence>
<feature type="chain" id="PRO_1000009853" description="Triosephosphate isomerase">
    <location>
        <begin position="1"/>
        <end position="251"/>
    </location>
</feature>
<feature type="active site" description="Electrophile" evidence="1">
    <location>
        <position position="95"/>
    </location>
</feature>
<feature type="active site" description="Proton acceptor" evidence="1">
    <location>
        <position position="167"/>
    </location>
</feature>
<feature type="binding site" evidence="1">
    <location>
        <begin position="9"/>
        <end position="11"/>
    </location>
    <ligand>
        <name>substrate</name>
    </ligand>
</feature>
<feature type="binding site" evidence="1">
    <location>
        <position position="173"/>
    </location>
    <ligand>
        <name>substrate</name>
    </ligand>
</feature>
<feature type="binding site" evidence="1">
    <location>
        <position position="212"/>
    </location>
    <ligand>
        <name>substrate</name>
    </ligand>
</feature>
<feature type="binding site" evidence="1">
    <location>
        <begin position="233"/>
        <end position="234"/>
    </location>
    <ligand>
        <name>substrate</name>
    </ligand>
</feature>
<dbReference type="EC" id="5.3.1.1" evidence="1"/>
<dbReference type="EMBL" id="CP000712">
    <property type="protein sequence ID" value="ABQ80701.1"/>
    <property type="molecule type" value="Genomic_DNA"/>
</dbReference>
<dbReference type="SMR" id="A5W991"/>
<dbReference type="KEGG" id="ppf:Pput_4581"/>
<dbReference type="eggNOG" id="COG0149">
    <property type="taxonomic scope" value="Bacteria"/>
</dbReference>
<dbReference type="HOGENOM" id="CLU_024251_2_1_6"/>
<dbReference type="UniPathway" id="UPA00109">
    <property type="reaction ID" value="UER00189"/>
</dbReference>
<dbReference type="UniPathway" id="UPA00138"/>
<dbReference type="GO" id="GO:0005829">
    <property type="term" value="C:cytosol"/>
    <property type="evidence" value="ECO:0007669"/>
    <property type="project" value="TreeGrafter"/>
</dbReference>
<dbReference type="GO" id="GO:0004807">
    <property type="term" value="F:triose-phosphate isomerase activity"/>
    <property type="evidence" value="ECO:0007669"/>
    <property type="project" value="UniProtKB-UniRule"/>
</dbReference>
<dbReference type="GO" id="GO:0006094">
    <property type="term" value="P:gluconeogenesis"/>
    <property type="evidence" value="ECO:0007669"/>
    <property type="project" value="UniProtKB-UniRule"/>
</dbReference>
<dbReference type="GO" id="GO:0046166">
    <property type="term" value="P:glyceraldehyde-3-phosphate biosynthetic process"/>
    <property type="evidence" value="ECO:0007669"/>
    <property type="project" value="TreeGrafter"/>
</dbReference>
<dbReference type="GO" id="GO:0019563">
    <property type="term" value="P:glycerol catabolic process"/>
    <property type="evidence" value="ECO:0007669"/>
    <property type="project" value="TreeGrafter"/>
</dbReference>
<dbReference type="GO" id="GO:0006096">
    <property type="term" value="P:glycolytic process"/>
    <property type="evidence" value="ECO:0007669"/>
    <property type="project" value="UniProtKB-UniRule"/>
</dbReference>
<dbReference type="CDD" id="cd00311">
    <property type="entry name" value="TIM"/>
    <property type="match status" value="1"/>
</dbReference>
<dbReference type="FunFam" id="3.20.20.70:FF:000016">
    <property type="entry name" value="Triosephosphate isomerase"/>
    <property type="match status" value="1"/>
</dbReference>
<dbReference type="Gene3D" id="3.20.20.70">
    <property type="entry name" value="Aldolase class I"/>
    <property type="match status" value="1"/>
</dbReference>
<dbReference type="HAMAP" id="MF_00147_B">
    <property type="entry name" value="TIM_B"/>
    <property type="match status" value="1"/>
</dbReference>
<dbReference type="InterPro" id="IPR013785">
    <property type="entry name" value="Aldolase_TIM"/>
</dbReference>
<dbReference type="InterPro" id="IPR035990">
    <property type="entry name" value="TIM_sf"/>
</dbReference>
<dbReference type="InterPro" id="IPR022896">
    <property type="entry name" value="TrioseP_Isoase_bac/euk"/>
</dbReference>
<dbReference type="InterPro" id="IPR000652">
    <property type="entry name" value="Triosephosphate_isomerase"/>
</dbReference>
<dbReference type="InterPro" id="IPR020861">
    <property type="entry name" value="Triosephosphate_isomerase_AS"/>
</dbReference>
<dbReference type="NCBIfam" id="TIGR00419">
    <property type="entry name" value="tim"/>
    <property type="match status" value="1"/>
</dbReference>
<dbReference type="PANTHER" id="PTHR21139">
    <property type="entry name" value="TRIOSEPHOSPHATE ISOMERASE"/>
    <property type="match status" value="1"/>
</dbReference>
<dbReference type="PANTHER" id="PTHR21139:SF42">
    <property type="entry name" value="TRIOSEPHOSPHATE ISOMERASE"/>
    <property type="match status" value="1"/>
</dbReference>
<dbReference type="Pfam" id="PF00121">
    <property type="entry name" value="TIM"/>
    <property type="match status" value="1"/>
</dbReference>
<dbReference type="SUPFAM" id="SSF51351">
    <property type="entry name" value="Triosephosphate isomerase (TIM)"/>
    <property type="match status" value="1"/>
</dbReference>
<dbReference type="PROSITE" id="PS00171">
    <property type="entry name" value="TIM_1"/>
    <property type="match status" value="1"/>
</dbReference>
<dbReference type="PROSITE" id="PS51440">
    <property type="entry name" value="TIM_2"/>
    <property type="match status" value="1"/>
</dbReference>
<comment type="function">
    <text evidence="1">Involved in the gluconeogenesis. Catalyzes stereospecifically the conversion of dihydroxyacetone phosphate (DHAP) to D-glyceraldehyde-3-phosphate (G3P).</text>
</comment>
<comment type="catalytic activity">
    <reaction evidence="1">
        <text>D-glyceraldehyde 3-phosphate = dihydroxyacetone phosphate</text>
        <dbReference type="Rhea" id="RHEA:18585"/>
        <dbReference type="ChEBI" id="CHEBI:57642"/>
        <dbReference type="ChEBI" id="CHEBI:59776"/>
        <dbReference type="EC" id="5.3.1.1"/>
    </reaction>
</comment>
<comment type="pathway">
    <text evidence="1">Carbohydrate biosynthesis; gluconeogenesis.</text>
</comment>
<comment type="pathway">
    <text evidence="1">Carbohydrate degradation; glycolysis; D-glyceraldehyde 3-phosphate from glycerone phosphate: step 1/1.</text>
</comment>
<comment type="subunit">
    <text evidence="1">Homodimer.</text>
</comment>
<comment type="subcellular location">
    <subcellularLocation>
        <location evidence="1">Cytoplasm</location>
    </subcellularLocation>
</comment>
<comment type="similarity">
    <text evidence="1">Belongs to the triosephosphate isomerase family.</text>
</comment>
<reference key="1">
    <citation type="submission" date="2007-05" db="EMBL/GenBank/DDBJ databases">
        <title>Complete sequence of Pseudomonas putida F1.</title>
        <authorList>
            <consortium name="US DOE Joint Genome Institute"/>
            <person name="Copeland A."/>
            <person name="Lucas S."/>
            <person name="Lapidus A."/>
            <person name="Barry K."/>
            <person name="Detter J.C."/>
            <person name="Glavina del Rio T."/>
            <person name="Hammon N."/>
            <person name="Israni S."/>
            <person name="Dalin E."/>
            <person name="Tice H."/>
            <person name="Pitluck S."/>
            <person name="Chain P."/>
            <person name="Malfatti S."/>
            <person name="Shin M."/>
            <person name="Vergez L."/>
            <person name="Schmutz J."/>
            <person name="Larimer F."/>
            <person name="Land M."/>
            <person name="Hauser L."/>
            <person name="Kyrpides N."/>
            <person name="Lykidis A."/>
            <person name="Parales R."/>
            <person name="Richardson P."/>
        </authorList>
    </citation>
    <scope>NUCLEOTIDE SEQUENCE [LARGE SCALE GENOMIC DNA]</scope>
    <source>
        <strain>ATCC 700007 / DSM 6899 / JCM 31910 / BCRC 17059 / LMG 24140 / F1</strain>
    </source>
</reference>
<organism>
    <name type="scientific">Pseudomonas putida (strain ATCC 700007 / DSM 6899 / JCM 31910 / BCRC 17059 / LMG 24140 / F1)</name>
    <dbReference type="NCBI Taxonomy" id="351746"/>
    <lineage>
        <taxon>Bacteria</taxon>
        <taxon>Pseudomonadati</taxon>
        <taxon>Pseudomonadota</taxon>
        <taxon>Gammaproteobacteria</taxon>
        <taxon>Pseudomonadales</taxon>
        <taxon>Pseudomonadaceae</taxon>
        <taxon>Pseudomonas</taxon>
    </lineage>
</organism>
<sequence length="251" mass="25991">MRRPMVAGNWKMHGTRASVAELTKGLSNLALPSGVEVAVFPPALFINQVIDGLAGKEITVGAQNSAVQPEQGALTGEVAPEQLVEAGCKLVLIGHSERRQIIGETDEVLNRKFAAAQAKGLKPVLCIGETLEEREAGKTLEVVGRQLSSIIEAFGVKAFADAVIAYEPVWAIGTGLTATPQQAQDVHAAIRGQLAAEDAEVAAKVQLLYGGSVKAANAAELFGMPDIDGGLIGGASLNADEFGAICRAAGN</sequence>
<proteinExistence type="inferred from homology"/>